<feature type="chain" id="PRO_0000080163" description="Chloride anion exchanger">
    <location>
        <begin position="1"/>
        <end position="757"/>
    </location>
</feature>
<feature type="topological domain" description="Cytoplasmic" evidence="5">
    <location>
        <begin position="1"/>
        <end position="71"/>
    </location>
</feature>
<feature type="transmembrane region" description="Helical" evidence="3">
    <location>
        <begin position="72"/>
        <end position="92"/>
    </location>
</feature>
<feature type="topological domain" description="Extracellular" evidence="5">
    <location>
        <position position="93"/>
    </location>
</feature>
<feature type="transmembrane region" description="Helical" evidence="3">
    <location>
        <begin position="94"/>
        <end position="114"/>
    </location>
</feature>
<feature type="topological domain" description="Cytoplasmic" evidence="5">
    <location>
        <begin position="115"/>
        <end position="124"/>
    </location>
</feature>
<feature type="transmembrane region" description="Helical" evidence="3">
    <location>
        <begin position="125"/>
        <end position="145"/>
    </location>
</feature>
<feature type="topological domain" description="Extracellular" evidence="5">
    <location>
        <begin position="146"/>
        <end position="176"/>
    </location>
</feature>
<feature type="transmembrane region" description="Helical" evidence="3">
    <location>
        <begin position="177"/>
        <end position="197"/>
    </location>
</feature>
<feature type="topological domain" description="Cytoplasmic" evidence="5">
    <location>
        <begin position="198"/>
        <end position="201"/>
    </location>
</feature>
<feature type="transmembrane region" description="Helical" evidence="3">
    <location>
        <begin position="202"/>
        <end position="222"/>
    </location>
</feature>
<feature type="topological domain" description="Extracellular" evidence="5">
    <location>
        <begin position="223"/>
        <end position="250"/>
    </location>
</feature>
<feature type="transmembrane region" description="Helical" evidence="3">
    <location>
        <begin position="251"/>
        <end position="271"/>
    </location>
</feature>
<feature type="topological domain" description="Cytoplasmic" evidence="5">
    <location>
        <begin position="272"/>
        <end position="278"/>
    </location>
</feature>
<feature type="transmembrane region" description="Helical" evidence="3">
    <location>
        <begin position="279"/>
        <end position="299"/>
    </location>
</feature>
<feature type="topological domain" description="Extracellular" evidence="5">
    <location>
        <begin position="300"/>
        <end position="335"/>
    </location>
</feature>
<feature type="transmembrane region" description="Helical" evidence="3">
    <location>
        <begin position="336"/>
        <end position="356"/>
    </location>
</feature>
<feature type="topological domain" description="Cytoplasmic" evidence="5">
    <location>
        <begin position="357"/>
        <end position="367"/>
    </location>
</feature>
<feature type="transmembrane region" description="Helical" evidence="3">
    <location>
        <begin position="368"/>
        <end position="388"/>
    </location>
</feature>
<feature type="topological domain" description="Extracellular" evidence="5">
    <location>
        <begin position="389"/>
        <end position="404"/>
    </location>
</feature>
<feature type="transmembrane region" description="Helical" evidence="3">
    <location>
        <begin position="405"/>
        <end position="425"/>
    </location>
</feature>
<feature type="topological domain" description="Cytoplasmic" evidence="5">
    <location>
        <begin position="426"/>
        <end position="462"/>
    </location>
</feature>
<feature type="transmembrane region" description="Helical" evidence="3">
    <location>
        <begin position="463"/>
        <end position="483"/>
    </location>
</feature>
<feature type="topological domain" description="Extracellular" evidence="5">
    <location>
        <begin position="484"/>
        <end position="757"/>
    </location>
</feature>
<feature type="domain" description="STAS" evidence="4">
    <location>
        <begin position="518"/>
        <end position="713"/>
    </location>
</feature>
<feature type="short sequence motif" description="PDZ-binding" evidence="1">
    <location>
        <begin position="754"/>
        <end position="757"/>
    </location>
</feature>
<feature type="glycosylation site" description="N-linked (GlcNAc...) asparagine" evidence="3">
    <location>
        <position position="161"/>
    </location>
</feature>
<organism>
    <name type="scientific">Rattus norvegicus</name>
    <name type="common">Rat</name>
    <dbReference type="NCBI Taxonomy" id="10116"/>
    <lineage>
        <taxon>Eukaryota</taxon>
        <taxon>Metazoa</taxon>
        <taxon>Chordata</taxon>
        <taxon>Craniata</taxon>
        <taxon>Vertebrata</taxon>
        <taxon>Euteleostomi</taxon>
        <taxon>Mammalia</taxon>
        <taxon>Eutheria</taxon>
        <taxon>Euarchontoglires</taxon>
        <taxon>Glires</taxon>
        <taxon>Rodentia</taxon>
        <taxon>Myomorpha</taxon>
        <taxon>Muroidea</taxon>
        <taxon>Muridae</taxon>
        <taxon>Murinae</taxon>
        <taxon>Rattus</taxon>
    </lineage>
</organism>
<gene>
    <name type="primary">Slc26a3</name>
    <name type="synonym">Dra</name>
</gene>
<protein>
    <recommendedName>
        <fullName>Chloride anion exchanger</fullName>
    </recommendedName>
    <alternativeName>
        <fullName>Down-regulated in adenoma</fullName>
        <shortName>Protein DRA</shortName>
    </alternativeName>
    <alternativeName>
        <fullName>Solute carrier family 26 member 3</fullName>
    </alternativeName>
</protein>
<evidence type="ECO:0000250" key="1">
    <source>
        <dbReference type="UniProtKB" id="P40879"/>
    </source>
</evidence>
<evidence type="ECO:0000250" key="2">
    <source>
        <dbReference type="UniProtKB" id="Q9WVC8"/>
    </source>
</evidence>
<evidence type="ECO:0000255" key="3"/>
<evidence type="ECO:0000255" key="4">
    <source>
        <dbReference type="PROSITE-ProRule" id="PRU00198"/>
    </source>
</evidence>
<evidence type="ECO:0000305" key="5"/>
<proteinExistence type="evidence at transcript level"/>
<accession>Q924C9</accession>
<comment type="function">
    <text evidence="1 2">Mediates chloride-bicarbonate exchange with a chloride bicarbonate stoichiometry of 2:1 in the intestinal epithelia (By similarity). Plays a role in the chloride and bicarbonate homeostasis during sperm epididymal maturation and capacitation (By similarity).</text>
</comment>
<comment type="catalytic activity">
    <reaction evidence="1">
        <text>hydrogencarbonate(in) + 2 chloride(out) = hydrogencarbonate(out) + 2 chloride(in)</text>
        <dbReference type="Rhea" id="RHEA:72203"/>
        <dbReference type="ChEBI" id="CHEBI:17544"/>
        <dbReference type="ChEBI" id="CHEBI:17996"/>
    </reaction>
</comment>
<comment type="subunit">
    <text evidence="1 2">Interacts with PDZK1, CFTR, SLC26A6 and NHERF1 (By similarity). Interacts (via PDZ-binding motif) with NHERF4 (via the third PDZ domain); interaction leads to decreased expression of SLC26A3 on the cell membrane resulting in its reduced exchanger activity (By similarity).</text>
</comment>
<comment type="subcellular location">
    <subcellularLocation>
        <location evidence="1">Apical cell membrane</location>
        <topology evidence="3">Multi-pass membrane protein</topology>
    </subcellularLocation>
    <subcellularLocation>
        <location evidence="2">Membrane</location>
        <topology evidence="3">Multi-pass membrane protein</topology>
    </subcellularLocation>
    <subcellularLocation>
        <location evidence="1">Cell membrane</location>
        <topology evidence="3">Multi-pass membrane protein</topology>
    </subcellularLocation>
    <text evidence="2">Localized in sperm membranes. Midpiece of sperm tail. Colocalizes with CFTR at the midpiece of sperm tail (By similarity).</text>
</comment>
<comment type="PTM">
    <text evidence="1">N-glycosylation is required for efficient cell surface expression, and protection from proteolytic degradation.</text>
</comment>
<comment type="similarity">
    <text evidence="5">Belongs to the SLC26A/SulP transporter (TC 2.A.53) family.</text>
</comment>
<sequence length="757" mass="83369">MIEAIGNQYVVARPVYSTKAFGEEFKKTYGHHKTFLDHLKGCCSCSSQKAKKIALSLFPIASWLPAYKIKEWLLSDIVSGISTGLVAVLQGLAFALLVNIPPAYGLYAAFFPVITYFFLGTSRHISVGPFPVLSMMVGVVVTRVASGSDTSPALSSSSAENDSMIEEKVMVAASVTVLSGIIQLLLGVLQIGFVVIYLSESLISGFTTAAAIHVLVSQLKFMLQLTVPAHSDPFSIFKVLESVFSQIQKTNIADLVTSVIILVVVFVVKEINQRYRSKLPVPIPIELIMTVIATGISYGCNFEQRFGVAVVGNMSLGFQPPITPSVEVFQDTIGDCFGIAIVGFAVAFSVASVYSLKYDYPIDGNQELIALGVSNIFTGAFKGFAGSTALSRSGVQESTGGKTQVAGLLSAVIVLIVIVAIGFLLQPLQKSVLAALALGNLKGMLMQFAEIGRLWKKDKYDCLIWIMTFIFAIVLGLGLGLAASVAFQLLTIVFRTQFPKCSTLANVGRSNIYKNKKNYADVYEPEGVKIFRCPSPIYFANIGFFKQKLIDAVGFNPLRILRKRNKALKKIRKLQKQGLIQVTPKGFICTSDGFKDSDEELDNNQIEELDQPINTTDLPFEIDWNADLPLNITIPKISLHSLILDFSAVSFLDISSMRGLRTILQEFIRIKVDVYIVGTDDDFIDKLARCEFFDDEVTDSIFFLTIHDAILHIWMKKDYSTSKFNSSQEKERKFDFTINTNGGLRNRECQVPVETKF</sequence>
<name>S26A3_RAT</name>
<reference key="1">
    <citation type="submission" date="2001-01" db="EMBL/GenBank/DDBJ databases">
        <title>Molecular cloning and characterization of down-regulated in adenoma (DRA) mRNA from rat colon.</title>
        <authorList>
            <person name="Ye H.J."/>
            <person name="Binder H.J."/>
            <person name="Rajendran V.M."/>
        </authorList>
    </citation>
    <scope>NUCLEOTIDE SEQUENCE [MRNA]</scope>
    <source>
        <tissue>Colon</tissue>
    </source>
</reference>
<keyword id="KW-0050">Antiport</keyword>
<keyword id="KW-1003">Cell membrane</keyword>
<keyword id="KW-0868">Chloride</keyword>
<keyword id="KW-0325">Glycoprotein</keyword>
<keyword id="KW-0472">Membrane</keyword>
<keyword id="KW-1185">Reference proteome</keyword>
<keyword id="KW-0812">Transmembrane</keyword>
<keyword id="KW-1133">Transmembrane helix</keyword>
<keyword id="KW-0813">Transport</keyword>
<dbReference type="EMBL" id="AF337809">
    <property type="protein sequence ID" value="AAK83221.1"/>
    <property type="molecule type" value="mRNA"/>
</dbReference>
<dbReference type="RefSeq" id="NP_446207.1">
    <property type="nucleotide sequence ID" value="NM_053755.2"/>
</dbReference>
<dbReference type="SMR" id="Q924C9"/>
<dbReference type="FunCoup" id="Q924C9">
    <property type="interactions" value="319"/>
</dbReference>
<dbReference type="STRING" id="10116.ENSRNOP00000009473"/>
<dbReference type="GlyCosmos" id="Q924C9">
    <property type="glycosylation" value="1 site, No reported glycans"/>
</dbReference>
<dbReference type="GlyGen" id="Q924C9">
    <property type="glycosylation" value="2 sites"/>
</dbReference>
<dbReference type="iPTMnet" id="Q924C9"/>
<dbReference type="PhosphoSitePlus" id="Q924C9"/>
<dbReference type="PaxDb" id="10116-ENSRNOP00000009473"/>
<dbReference type="Ensembl" id="ENSRNOT00000009473.4">
    <property type="protein sequence ID" value="ENSRNOP00000009473.3"/>
    <property type="gene ID" value="ENSRNOG00000006878.5"/>
</dbReference>
<dbReference type="GeneID" id="114629"/>
<dbReference type="KEGG" id="rno:114629"/>
<dbReference type="UCSC" id="RGD:620623">
    <property type="organism name" value="rat"/>
</dbReference>
<dbReference type="AGR" id="RGD:620623"/>
<dbReference type="CTD" id="1811"/>
<dbReference type="RGD" id="620623">
    <property type="gene designation" value="Slc26a3"/>
</dbReference>
<dbReference type="eggNOG" id="KOG0236">
    <property type="taxonomic scope" value="Eukaryota"/>
</dbReference>
<dbReference type="GeneTree" id="ENSGT01070000253775"/>
<dbReference type="HOGENOM" id="CLU_003182_9_4_1"/>
<dbReference type="InParanoid" id="Q924C9"/>
<dbReference type="OMA" id="WVMTFIF"/>
<dbReference type="PhylomeDB" id="Q924C9"/>
<dbReference type="TreeFam" id="TF313784"/>
<dbReference type="Reactome" id="R-RNO-427601">
    <property type="pathway name" value="Multifunctional anion exchangers"/>
</dbReference>
<dbReference type="PRO" id="PR:Q924C9"/>
<dbReference type="Proteomes" id="UP000002494">
    <property type="component" value="Chromosome 6"/>
</dbReference>
<dbReference type="Bgee" id="ENSRNOG00000006878">
    <property type="expression patterns" value="Expressed in duodenum and 10 other cell types or tissues"/>
</dbReference>
<dbReference type="GO" id="GO:0016324">
    <property type="term" value="C:apical plasma membrane"/>
    <property type="evidence" value="ECO:0000314"/>
    <property type="project" value="RGD"/>
</dbReference>
<dbReference type="GO" id="GO:0031526">
    <property type="term" value="C:brush border membrane"/>
    <property type="evidence" value="ECO:0000314"/>
    <property type="project" value="RGD"/>
</dbReference>
<dbReference type="GO" id="GO:0016020">
    <property type="term" value="C:membrane"/>
    <property type="evidence" value="ECO:0000250"/>
    <property type="project" value="UniProtKB"/>
</dbReference>
<dbReference type="GO" id="GO:0005886">
    <property type="term" value="C:plasma membrane"/>
    <property type="evidence" value="ECO:0000266"/>
    <property type="project" value="RGD"/>
</dbReference>
<dbReference type="GO" id="GO:0097225">
    <property type="term" value="C:sperm midpiece"/>
    <property type="evidence" value="ECO:0000250"/>
    <property type="project" value="UniProtKB"/>
</dbReference>
<dbReference type="GO" id="GO:0015106">
    <property type="term" value="F:bicarbonate transmembrane transporter activity"/>
    <property type="evidence" value="ECO:0000250"/>
    <property type="project" value="UniProtKB"/>
</dbReference>
<dbReference type="GO" id="GO:0015108">
    <property type="term" value="F:chloride transmembrane transporter activity"/>
    <property type="evidence" value="ECO:0000250"/>
    <property type="project" value="UniProtKB"/>
</dbReference>
<dbReference type="GO" id="GO:0140900">
    <property type="term" value="F:chloride:bicarbonate antiporter activity"/>
    <property type="evidence" value="ECO:0000266"/>
    <property type="project" value="RGD"/>
</dbReference>
<dbReference type="GO" id="GO:0019531">
    <property type="term" value="F:oxalate transmembrane transporter activity"/>
    <property type="evidence" value="ECO:0000318"/>
    <property type="project" value="GO_Central"/>
</dbReference>
<dbReference type="GO" id="GO:0008271">
    <property type="term" value="F:secondary active sulfate transmembrane transporter activity"/>
    <property type="evidence" value="ECO:0007669"/>
    <property type="project" value="InterPro"/>
</dbReference>
<dbReference type="GO" id="GO:0015116">
    <property type="term" value="F:sulfate transmembrane transporter activity"/>
    <property type="evidence" value="ECO:0000318"/>
    <property type="project" value="GO_Central"/>
</dbReference>
<dbReference type="GO" id="GO:0071320">
    <property type="term" value="P:cellular response to cAMP"/>
    <property type="evidence" value="ECO:0000250"/>
    <property type="project" value="UniProtKB"/>
</dbReference>
<dbReference type="GO" id="GO:1902476">
    <property type="term" value="P:chloride transmembrane transport"/>
    <property type="evidence" value="ECO:0000318"/>
    <property type="project" value="GO_Central"/>
</dbReference>
<dbReference type="GO" id="GO:0051454">
    <property type="term" value="P:intracellular pH elevation"/>
    <property type="evidence" value="ECO:0000250"/>
    <property type="project" value="UniProtKB"/>
</dbReference>
<dbReference type="GO" id="GO:0060081">
    <property type="term" value="P:membrane hyperpolarization"/>
    <property type="evidence" value="ECO:0000250"/>
    <property type="project" value="UniProtKB"/>
</dbReference>
<dbReference type="GO" id="GO:0048240">
    <property type="term" value="P:sperm capacitation"/>
    <property type="evidence" value="ECO:0000250"/>
    <property type="project" value="UniProtKB"/>
</dbReference>
<dbReference type="GO" id="GO:1902358">
    <property type="term" value="P:sulfate transmembrane transport"/>
    <property type="evidence" value="ECO:0000318"/>
    <property type="project" value="GO_Central"/>
</dbReference>
<dbReference type="CDD" id="cd07042">
    <property type="entry name" value="STAS_SulP_like_sulfate_transporter"/>
    <property type="match status" value="1"/>
</dbReference>
<dbReference type="Gene3D" id="3.30.750.24">
    <property type="entry name" value="STAS domain"/>
    <property type="match status" value="1"/>
</dbReference>
<dbReference type="InterPro" id="IPR018045">
    <property type="entry name" value="S04_transporter_CS"/>
</dbReference>
<dbReference type="InterPro" id="IPR011547">
    <property type="entry name" value="SLC26A/SulP_dom"/>
</dbReference>
<dbReference type="InterPro" id="IPR001902">
    <property type="entry name" value="SLC26A/SulP_fam"/>
</dbReference>
<dbReference type="InterPro" id="IPR002645">
    <property type="entry name" value="STAS_dom"/>
</dbReference>
<dbReference type="InterPro" id="IPR036513">
    <property type="entry name" value="STAS_dom_sf"/>
</dbReference>
<dbReference type="NCBIfam" id="TIGR00815">
    <property type="entry name" value="sulP"/>
    <property type="match status" value="1"/>
</dbReference>
<dbReference type="PANTHER" id="PTHR11814">
    <property type="entry name" value="SULFATE TRANSPORTER"/>
    <property type="match status" value="1"/>
</dbReference>
<dbReference type="Pfam" id="PF01740">
    <property type="entry name" value="STAS"/>
    <property type="match status" value="1"/>
</dbReference>
<dbReference type="Pfam" id="PF00916">
    <property type="entry name" value="Sulfate_transp"/>
    <property type="match status" value="1"/>
</dbReference>
<dbReference type="SUPFAM" id="SSF52091">
    <property type="entry name" value="SpoIIaa-like"/>
    <property type="match status" value="1"/>
</dbReference>
<dbReference type="PROSITE" id="PS01130">
    <property type="entry name" value="SLC26A"/>
    <property type="match status" value="1"/>
</dbReference>
<dbReference type="PROSITE" id="PS50801">
    <property type="entry name" value="STAS"/>
    <property type="match status" value="1"/>
</dbReference>